<evidence type="ECO:0000255" key="1">
    <source>
        <dbReference type="HAMAP-Rule" id="MF_00141"/>
    </source>
</evidence>
<gene>
    <name evidence="1" type="primary">efp</name>
    <name type="ordered locus">Shal_2245</name>
</gene>
<protein>
    <recommendedName>
        <fullName evidence="1">Elongation factor P</fullName>
        <shortName evidence="1">EF-P</shortName>
    </recommendedName>
</protein>
<comment type="function">
    <text evidence="1">Involved in peptide bond synthesis. Stimulates efficient translation and peptide-bond synthesis on native or reconstituted 70S ribosomes in vitro. Probably functions indirectly by altering the affinity of the ribosome for aminoacyl-tRNA, thus increasing their reactivity as acceptors for peptidyl transferase.</text>
</comment>
<comment type="pathway">
    <text evidence="1">Protein biosynthesis; polypeptide chain elongation.</text>
</comment>
<comment type="subcellular location">
    <subcellularLocation>
        <location evidence="1">Cytoplasm</location>
    </subcellularLocation>
</comment>
<comment type="similarity">
    <text evidence="1">Belongs to the elongation factor P family.</text>
</comment>
<proteinExistence type="inferred from homology"/>
<dbReference type="EMBL" id="CP000931">
    <property type="protein sequence ID" value="ABZ76804.1"/>
    <property type="molecule type" value="Genomic_DNA"/>
</dbReference>
<dbReference type="RefSeq" id="WP_012155285.1">
    <property type="nucleotide sequence ID" value="NC_010334.1"/>
</dbReference>
<dbReference type="SMR" id="B0TUS6"/>
<dbReference type="STRING" id="458817.Shal_2245"/>
<dbReference type="KEGG" id="shl:Shal_2245"/>
<dbReference type="eggNOG" id="COG0231">
    <property type="taxonomic scope" value="Bacteria"/>
</dbReference>
<dbReference type="HOGENOM" id="CLU_074944_2_1_6"/>
<dbReference type="OrthoDB" id="9801844at2"/>
<dbReference type="UniPathway" id="UPA00345"/>
<dbReference type="Proteomes" id="UP000001317">
    <property type="component" value="Chromosome"/>
</dbReference>
<dbReference type="GO" id="GO:0005737">
    <property type="term" value="C:cytoplasm"/>
    <property type="evidence" value="ECO:0007669"/>
    <property type="project" value="UniProtKB-SubCell"/>
</dbReference>
<dbReference type="GO" id="GO:0003746">
    <property type="term" value="F:translation elongation factor activity"/>
    <property type="evidence" value="ECO:0007669"/>
    <property type="project" value="UniProtKB-UniRule"/>
</dbReference>
<dbReference type="GO" id="GO:0043043">
    <property type="term" value="P:peptide biosynthetic process"/>
    <property type="evidence" value="ECO:0007669"/>
    <property type="project" value="InterPro"/>
</dbReference>
<dbReference type="CDD" id="cd04470">
    <property type="entry name" value="S1_EF-P_repeat_1"/>
    <property type="match status" value="1"/>
</dbReference>
<dbReference type="CDD" id="cd05794">
    <property type="entry name" value="S1_EF-P_repeat_2"/>
    <property type="match status" value="1"/>
</dbReference>
<dbReference type="FunFam" id="2.30.30.30:FF:000003">
    <property type="entry name" value="Elongation factor P"/>
    <property type="match status" value="1"/>
</dbReference>
<dbReference type="FunFam" id="2.40.50.140:FF:000004">
    <property type="entry name" value="Elongation factor P"/>
    <property type="match status" value="1"/>
</dbReference>
<dbReference type="FunFam" id="2.40.50.140:FF:000009">
    <property type="entry name" value="Elongation factor P"/>
    <property type="match status" value="1"/>
</dbReference>
<dbReference type="Gene3D" id="2.30.30.30">
    <property type="match status" value="1"/>
</dbReference>
<dbReference type="Gene3D" id="2.40.50.140">
    <property type="entry name" value="Nucleic acid-binding proteins"/>
    <property type="match status" value="2"/>
</dbReference>
<dbReference type="HAMAP" id="MF_00141">
    <property type="entry name" value="EF_P"/>
    <property type="match status" value="1"/>
</dbReference>
<dbReference type="InterPro" id="IPR015365">
    <property type="entry name" value="Elong-fact-P_C"/>
</dbReference>
<dbReference type="InterPro" id="IPR012340">
    <property type="entry name" value="NA-bd_OB-fold"/>
</dbReference>
<dbReference type="InterPro" id="IPR014722">
    <property type="entry name" value="Rib_uL2_dom2"/>
</dbReference>
<dbReference type="InterPro" id="IPR020599">
    <property type="entry name" value="Transl_elong_fac_P/YeiP"/>
</dbReference>
<dbReference type="InterPro" id="IPR013185">
    <property type="entry name" value="Transl_elong_KOW-like"/>
</dbReference>
<dbReference type="InterPro" id="IPR001059">
    <property type="entry name" value="Transl_elong_P/YeiP_cen"/>
</dbReference>
<dbReference type="InterPro" id="IPR011768">
    <property type="entry name" value="Transl_elongation_fac_P"/>
</dbReference>
<dbReference type="InterPro" id="IPR008991">
    <property type="entry name" value="Translation_prot_SH3-like_sf"/>
</dbReference>
<dbReference type="NCBIfam" id="TIGR00038">
    <property type="entry name" value="efp"/>
    <property type="match status" value="1"/>
</dbReference>
<dbReference type="NCBIfam" id="NF001810">
    <property type="entry name" value="PRK00529.1"/>
    <property type="match status" value="1"/>
</dbReference>
<dbReference type="PANTHER" id="PTHR30053">
    <property type="entry name" value="ELONGATION FACTOR P"/>
    <property type="match status" value="1"/>
</dbReference>
<dbReference type="PANTHER" id="PTHR30053:SF12">
    <property type="entry name" value="ELONGATION FACTOR P (EF-P) FAMILY PROTEIN"/>
    <property type="match status" value="1"/>
</dbReference>
<dbReference type="Pfam" id="PF01132">
    <property type="entry name" value="EFP"/>
    <property type="match status" value="1"/>
</dbReference>
<dbReference type="Pfam" id="PF08207">
    <property type="entry name" value="EFP_N"/>
    <property type="match status" value="1"/>
</dbReference>
<dbReference type="Pfam" id="PF09285">
    <property type="entry name" value="Elong-fact-P_C"/>
    <property type="match status" value="1"/>
</dbReference>
<dbReference type="PIRSF" id="PIRSF005901">
    <property type="entry name" value="EF-P"/>
    <property type="match status" value="1"/>
</dbReference>
<dbReference type="SMART" id="SM01185">
    <property type="entry name" value="EFP"/>
    <property type="match status" value="1"/>
</dbReference>
<dbReference type="SMART" id="SM00841">
    <property type="entry name" value="Elong-fact-P_C"/>
    <property type="match status" value="1"/>
</dbReference>
<dbReference type="SUPFAM" id="SSF50249">
    <property type="entry name" value="Nucleic acid-binding proteins"/>
    <property type="match status" value="2"/>
</dbReference>
<dbReference type="SUPFAM" id="SSF50104">
    <property type="entry name" value="Translation proteins SH3-like domain"/>
    <property type="match status" value="1"/>
</dbReference>
<feature type="chain" id="PRO_1000076533" description="Elongation factor P">
    <location>
        <begin position="1"/>
        <end position="186"/>
    </location>
</feature>
<reference key="1">
    <citation type="submission" date="2008-01" db="EMBL/GenBank/DDBJ databases">
        <title>Complete sequence of Shewanella halifaxensis HAW-EB4.</title>
        <authorList>
            <consortium name="US DOE Joint Genome Institute"/>
            <person name="Copeland A."/>
            <person name="Lucas S."/>
            <person name="Lapidus A."/>
            <person name="Glavina del Rio T."/>
            <person name="Dalin E."/>
            <person name="Tice H."/>
            <person name="Bruce D."/>
            <person name="Goodwin L."/>
            <person name="Pitluck S."/>
            <person name="Sims D."/>
            <person name="Brettin T."/>
            <person name="Detter J.C."/>
            <person name="Han C."/>
            <person name="Kuske C.R."/>
            <person name="Schmutz J."/>
            <person name="Larimer F."/>
            <person name="Land M."/>
            <person name="Hauser L."/>
            <person name="Kyrpides N."/>
            <person name="Kim E."/>
            <person name="Zhao J.-S."/>
            <person name="Richardson P."/>
        </authorList>
    </citation>
    <scope>NUCLEOTIDE SEQUENCE [LARGE SCALE GENOMIC DNA]</scope>
    <source>
        <strain>HAW-EB4</strain>
    </source>
</reference>
<keyword id="KW-0963">Cytoplasm</keyword>
<keyword id="KW-0251">Elongation factor</keyword>
<keyword id="KW-0648">Protein biosynthesis</keyword>
<sequence>MKTAHELRPGNVIMLDGSPWVVQKTETTRSGRNAAIVKLKLKHVLQDSSTESTFKGEDKMEDIILERLDCTYSYFADPMYVFMDAEYNQYDVEAENLGDAAAYIVDGMEENCQVTFYEGKAISVELPTSVVREVTYTEPSARGDTSGKVMKPATITGGGTLSVADFVKTGDMIEIDTRTNEFKKRV</sequence>
<organism>
    <name type="scientific">Shewanella halifaxensis (strain HAW-EB4)</name>
    <dbReference type="NCBI Taxonomy" id="458817"/>
    <lineage>
        <taxon>Bacteria</taxon>
        <taxon>Pseudomonadati</taxon>
        <taxon>Pseudomonadota</taxon>
        <taxon>Gammaproteobacteria</taxon>
        <taxon>Alteromonadales</taxon>
        <taxon>Shewanellaceae</taxon>
        <taxon>Shewanella</taxon>
    </lineage>
</organism>
<accession>B0TUS6</accession>
<name>EFP_SHEHH</name>